<gene>
    <name evidence="1" type="primary">hldD</name>
    <name type="ordered locus">PMI3176</name>
</gene>
<evidence type="ECO:0000255" key="1">
    <source>
        <dbReference type="HAMAP-Rule" id="MF_01601"/>
    </source>
</evidence>
<keyword id="KW-0119">Carbohydrate metabolism</keyword>
<keyword id="KW-0413">Isomerase</keyword>
<keyword id="KW-0521">NADP</keyword>
<keyword id="KW-1185">Reference proteome</keyword>
<name>HLDD_PROMH</name>
<feature type="chain" id="PRO_1000148085" description="ADP-L-glycero-D-manno-heptose-6-epimerase">
    <location>
        <begin position="1"/>
        <end position="312"/>
    </location>
</feature>
<feature type="active site" description="Proton acceptor" evidence="1">
    <location>
        <position position="140"/>
    </location>
</feature>
<feature type="active site" description="Proton acceptor" evidence="1">
    <location>
        <position position="178"/>
    </location>
</feature>
<feature type="binding site" evidence="1">
    <location>
        <begin position="10"/>
        <end position="11"/>
    </location>
    <ligand>
        <name>NADP(+)</name>
        <dbReference type="ChEBI" id="CHEBI:58349"/>
    </ligand>
</feature>
<feature type="binding site" evidence="1">
    <location>
        <begin position="31"/>
        <end position="32"/>
    </location>
    <ligand>
        <name>NADP(+)</name>
        <dbReference type="ChEBI" id="CHEBI:58349"/>
    </ligand>
</feature>
<feature type="binding site" evidence="1">
    <location>
        <position position="38"/>
    </location>
    <ligand>
        <name>NADP(+)</name>
        <dbReference type="ChEBI" id="CHEBI:58349"/>
    </ligand>
</feature>
<feature type="binding site" evidence="1">
    <location>
        <position position="53"/>
    </location>
    <ligand>
        <name>NADP(+)</name>
        <dbReference type="ChEBI" id="CHEBI:58349"/>
    </ligand>
</feature>
<feature type="binding site" evidence="1">
    <location>
        <begin position="75"/>
        <end position="79"/>
    </location>
    <ligand>
        <name>NADP(+)</name>
        <dbReference type="ChEBI" id="CHEBI:58349"/>
    </ligand>
</feature>
<feature type="binding site" evidence="1">
    <location>
        <position position="92"/>
    </location>
    <ligand>
        <name>NADP(+)</name>
        <dbReference type="ChEBI" id="CHEBI:58349"/>
    </ligand>
</feature>
<feature type="binding site" evidence="1">
    <location>
        <position position="144"/>
    </location>
    <ligand>
        <name>NADP(+)</name>
        <dbReference type="ChEBI" id="CHEBI:58349"/>
    </ligand>
</feature>
<feature type="binding site" evidence="1">
    <location>
        <position position="169"/>
    </location>
    <ligand>
        <name>substrate</name>
    </ligand>
</feature>
<feature type="binding site" evidence="1">
    <location>
        <position position="170"/>
    </location>
    <ligand>
        <name>NADP(+)</name>
        <dbReference type="ChEBI" id="CHEBI:58349"/>
    </ligand>
</feature>
<feature type="binding site" evidence="1">
    <location>
        <position position="178"/>
    </location>
    <ligand>
        <name>NADP(+)</name>
        <dbReference type="ChEBI" id="CHEBI:58349"/>
    </ligand>
</feature>
<feature type="binding site" evidence="1">
    <location>
        <position position="180"/>
    </location>
    <ligand>
        <name>substrate</name>
    </ligand>
</feature>
<feature type="binding site" evidence="1">
    <location>
        <position position="187"/>
    </location>
    <ligand>
        <name>substrate</name>
    </ligand>
</feature>
<feature type="binding site" evidence="1">
    <location>
        <begin position="201"/>
        <end position="204"/>
    </location>
    <ligand>
        <name>substrate</name>
    </ligand>
</feature>
<feature type="binding site" evidence="1">
    <location>
        <position position="209"/>
    </location>
    <ligand>
        <name>substrate</name>
    </ligand>
</feature>
<feature type="binding site" evidence="1">
    <location>
        <position position="274"/>
    </location>
    <ligand>
        <name>substrate</name>
    </ligand>
</feature>
<dbReference type="EC" id="5.1.3.20" evidence="1"/>
<dbReference type="EMBL" id="AM942759">
    <property type="protein sequence ID" value="CAR46235.1"/>
    <property type="molecule type" value="Genomic_DNA"/>
</dbReference>
<dbReference type="SMR" id="B4F132"/>
<dbReference type="EnsemblBacteria" id="CAR46235">
    <property type="protein sequence ID" value="CAR46235"/>
    <property type="gene ID" value="PMI3176"/>
</dbReference>
<dbReference type="GeneID" id="6801222"/>
<dbReference type="KEGG" id="pmr:PMI3176"/>
<dbReference type="eggNOG" id="COG0451">
    <property type="taxonomic scope" value="Bacteria"/>
</dbReference>
<dbReference type="HOGENOM" id="CLU_007383_1_3_6"/>
<dbReference type="UniPathway" id="UPA00356">
    <property type="reaction ID" value="UER00440"/>
</dbReference>
<dbReference type="Proteomes" id="UP000008319">
    <property type="component" value="Chromosome"/>
</dbReference>
<dbReference type="GO" id="GO:0008712">
    <property type="term" value="F:ADP-glyceromanno-heptose 6-epimerase activity"/>
    <property type="evidence" value="ECO:0007669"/>
    <property type="project" value="UniProtKB-UniRule"/>
</dbReference>
<dbReference type="GO" id="GO:0050661">
    <property type="term" value="F:NADP binding"/>
    <property type="evidence" value="ECO:0007669"/>
    <property type="project" value="InterPro"/>
</dbReference>
<dbReference type="GO" id="GO:0097171">
    <property type="term" value="P:ADP-L-glycero-beta-D-manno-heptose biosynthetic process"/>
    <property type="evidence" value="ECO:0007669"/>
    <property type="project" value="UniProtKB-UniPathway"/>
</dbReference>
<dbReference type="GO" id="GO:0005975">
    <property type="term" value="P:carbohydrate metabolic process"/>
    <property type="evidence" value="ECO:0007669"/>
    <property type="project" value="UniProtKB-UniRule"/>
</dbReference>
<dbReference type="CDD" id="cd05248">
    <property type="entry name" value="ADP_GME_SDR_e"/>
    <property type="match status" value="1"/>
</dbReference>
<dbReference type="Gene3D" id="3.40.50.720">
    <property type="entry name" value="NAD(P)-binding Rossmann-like Domain"/>
    <property type="match status" value="1"/>
</dbReference>
<dbReference type="Gene3D" id="3.90.25.10">
    <property type="entry name" value="UDP-galactose 4-epimerase, domain 1"/>
    <property type="match status" value="1"/>
</dbReference>
<dbReference type="HAMAP" id="MF_01601">
    <property type="entry name" value="Heptose_epimerase"/>
    <property type="match status" value="1"/>
</dbReference>
<dbReference type="InterPro" id="IPR001509">
    <property type="entry name" value="Epimerase_deHydtase"/>
</dbReference>
<dbReference type="InterPro" id="IPR011912">
    <property type="entry name" value="Heptose_epim"/>
</dbReference>
<dbReference type="InterPro" id="IPR036291">
    <property type="entry name" value="NAD(P)-bd_dom_sf"/>
</dbReference>
<dbReference type="NCBIfam" id="TIGR02197">
    <property type="entry name" value="heptose_epim"/>
    <property type="match status" value="1"/>
</dbReference>
<dbReference type="NCBIfam" id="NF008360">
    <property type="entry name" value="PRK11150.1"/>
    <property type="match status" value="1"/>
</dbReference>
<dbReference type="PANTHER" id="PTHR43103:SF3">
    <property type="entry name" value="ADP-L-GLYCERO-D-MANNO-HEPTOSE-6-EPIMERASE"/>
    <property type="match status" value="1"/>
</dbReference>
<dbReference type="PANTHER" id="PTHR43103">
    <property type="entry name" value="NUCLEOSIDE-DIPHOSPHATE-SUGAR EPIMERASE"/>
    <property type="match status" value="1"/>
</dbReference>
<dbReference type="Pfam" id="PF01370">
    <property type="entry name" value="Epimerase"/>
    <property type="match status" value="1"/>
</dbReference>
<dbReference type="SUPFAM" id="SSF51735">
    <property type="entry name" value="NAD(P)-binding Rossmann-fold domains"/>
    <property type="match status" value="1"/>
</dbReference>
<reference key="1">
    <citation type="journal article" date="2008" name="J. Bacteriol.">
        <title>Complete genome sequence of uropathogenic Proteus mirabilis, a master of both adherence and motility.</title>
        <authorList>
            <person name="Pearson M.M."/>
            <person name="Sebaihia M."/>
            <person name="Churcher C."/>
            <person name="Quail M.A."/>
            <person name="Seshasayee A.S."/>
            <person name="Luscombe N.M."/>
            <person name="Abdellah Z."/>
            <person name="Arrosmith C."/>
            <person name="Atkin B."/>
            <person name="Chillingworth T."/>
            <person name="Hauser H."/>
            <person name="Jagels K."/>
            <person name="Moule S."/>
            <person name="Mungall K."/>
            <person name="Norbertczak H."/>
            <person name="Rabbinowitsch E."/>
            <person name="Walker D."/>
            <person name="Whithead S."/>
            <person name="Thomson N.R."/>
            <person name="Rather P.N."/>
            <person name="Parkhill J."/>
            <person name="Mobley H.L.T."/>
        </authorList>
    </citation>
    <scope>NUCLEOTIDE SEQUENCE [LARGE SCALE GENOMIC DNA]</scope>
    <source>
        <strain>HI4320</strain>
    </source>
</reference>
<comment type="function">
    <text evidence="1">Catalyzes the interconversion between ADP-D-glycero-beta-D-manno-heptose and ADP-L-glycero-beta-D-manno-heptose via an epimerization at carbon 6 of the heptose.</text>
</comment>
<comment type="catalytic activity">
    <reaction evidence="1">
        <text>ADP-D-glycero-beta-D-manno-heptose = ADP-L-glycero-beta-D-manno-heptose</text>
        <dbReference type="Rhea" id="RHEA:17577"/>
        <dbReference type="ChEBI" id="CHEBI:59967"/>
        <dbReference type="ChEBI" id="CHEBI:61506"/>
        <dbReference type="EC" id="5.1.3.20"/>
    </reaction>
</comment>
<comment type="cofactor">
    <cofactor evidence="1">
        <name>NADP(+)</name>
        <dbReference type="ChEBI" id="CHEBI:58349"/>
    </cofactor>
    <text evidence="1">Binds 1 NADP(+) per subunit.</text>
</comment>
<comment type="pathway">
    <text evidence="1">Nucleotide-sugar biosynthesis; ADP-L-glycero-beta-D-manno-heptose biosynthesis; ADP-L-glycero-beta-D-manno-heptose from D-glycero-beta-D-manno-heptose 7-phosphate: step 4/4.</text>
</comment>
<comment type="subunit">
    <text evidence="1">Homopentamer.</text>
</comment>
<comment type="domain">
    <text evidence="1">Contains a large N-terminal NADP-binding domain, and a smaller C-terminal substrate-binding domain.</text>
</comment>
<comment type="similarity">
    <text evidence="1">Belongs to the NAD(P)-dependent epimerase/dehydratase family. HldD subfamily.</text>
</comment>
<organism>
    <name type="scientific">Proteus mirabilis (strain HI4320)</name>
    <dbReference type="NCBI Taxonomy" id="529507"/>
    <lineage>
        <taxon>Bacteria</taxon>
        <taxon>Pseudomonadati</taxon>
        <taxon>Pseudomonadota</taxon>
        <taxon>Gammaproteobacteria</taxon>
        <taxon>Enterobacterales</taxon>
        <taxon>Morganellaceae</taxon>
        <taxon>Proteus</taxon>
    </lineage>
</organism>
<protein>
    <recommendedName>
        <fullName evidence="1">ADP-L-glycero-D-manno-heptose-6-epimerase</fullName>
        <ecNumber evidence="1">5.1.3.20</ecNumber>
    </recommendedName>
    <alternativeName>
        <fullName evidence="1">ADP-L-glycero-beta-D-manno-heptose-6-epimerase</fullName>
        <shortName evidence="1">ADP-glyceromanno-heptose 6-epimerase</shortName>
        <shortName evidence="1">ADP-hep 6-epimerase</shortName>
        <shortName evidence="1">AGME</shortName>
    </alternativeName>
</protein>
<sequence length="312" mass="35193">MIIVTGGAGFIGSNIVKALNDEGYTDILVVDNLKDGTKFVNLVDLNIADYMDKEDFIASIVAGDDFGDIDAVFHEGACSSTTEWDGKYMMDNNYQYSKELLHYCLDRQIPFLYASSAATYGGRTDHFIEERKYEAPLNVYGYSKFLFDEYVRQILPEAQSMVCGFRYFNVYGPREGHKGSMASVAFHLNTQVNDGQNPKLFEGSETFQRDFIYVGDVAAVNLWFWRNNVSGIYNCGTGRAESFQAVADAVIAYHNDKDLSVEHIEFPEKLKGRYQAFTQADLTNLRKAGYSAPFKTVAEGVALYMQWLNQDK</sequence>
<accession>B4F132</accession>
<proteinExistence type="inferred from homology"/>